<reference key="1">
    <citation type="journal article" date="2003" name="Nucleic Acids Res.">
        <title>The complete genome sequence and analysis of Corynebacterium diphtheriae NCTC13129.</title>
        <authorList>
            <person name="Cerdeno-Tarraga A.-M."/>
            <person name="Efstratiou A."/>
            <person name="Dover L.G."/>
            <person name="Holden M.T.G."/>
            <person name="Pallen M.J."/>
            <person name="Bentley S.D."/>
            <person name="Besra G.S."/>
            <person name="Churcher C.M."/>
            <person name="James K.D."/>
            <person name="De Zoysa A."/>
            <person name="Chillingworth T."/>
            <person name="Cronin A."/>
            <person name="Dowd L."/>
            <person name="Feltwell T."/>
            <person name="Hamlin N."/>
            <person name="Holroyd S."/>
            <person name="Jagels K."/>
            <person name="Moule S."/>
            <person name="Quail M.A."/>
            <person name="Rabbinowitsch E."/>
            <person name="Rutherford K.M."/>
            <person name="Thomson N.R."/>
            <person name="Unwin L."/>
            <person name="Whitehead S."/>
            <person name="Barrell B.G."/>
            <person name="Parkhill J."/>
        </authorList>
    </citation>
    <scope>NUCLEOTIDE SEQUENCE [LARGE SCALE GENOMIC DNA]</scope>
    <source>
        <strain>ATCC 700971 / NCTC 13129 / Biotype gravis</strain>
    </source>
</reference>
<keyword id="KW-0963">Cytoplasm</keyword>
<keyword id="KW-1185">Reference proteome</keyword>
<keyword id="KW-0690">Ribosome biogenesis</keyword>
<organism>
    <name type="scientific">Corynebacterium diphtheriae (strain ATCC 700971 / NCTC 13129 / Biotype gravis)</name>
    <dbReference type="NCBI Taxonomy" id="257309"/>
    <lineage>
        <taxon>Bacteria</taxon>
        <taxon>Bacillati</taxon>
        <taxon>Actinomycetota</taxon>
        <taxon>Actinomycetes</taxon>
        <taxon>Mycobacteriales</taxon>
        <taxon>Corynebacteriaceae</taxon>
        <taxon>Corynebacterium</taxon>
    </lineage>
</organism>
<feature type="chain" id="PRO_0000181863" description="Ribosome maturation factor RimP">
    <location>
        <begin position="1"/>
        <end position="184"/>
    </location>
</feature>
<proteinExistence type="inferred from homology"/>
<dbReference type="EMBL" id="BX248358">
    <property type="protein sequence ID" value="CAE50008.1"/>
    <property type="molecule type" value="Genomic_DNA"/>
</dbReference>
<dbReference type="RefSeq" id="WP_010935095.1">
    <property type="nucleotide sequence ID" value="NC_002935.2"/>
</dbReference>
<dbReference type="SMR" id="Q6NGM9"/>
<dbReference type="STRING" id="257309.DIP1480"/>
<dbReference type="GeneID" id="29421259"/>
<dbReference type="KEGG" id="cdi:DIP1480"/>
<dbReference type="HOGENOM" id="CLU_070525_3_0_11"/>
<dbReference type="Proteomes" id="UP000002198">
    <property type="component" value="Chromosome"/>
</dbReference>
<dbReference type="GO" id="GO:0005829">
    <property type="term" value="C:cytosol"/>
    <property type="evidence" value="ECO:0007669"/>
    <property type="project" value="TreeGrafter"/>
</dbReference>
<dbReference type="GO" id="GO:0000028">
    <property type="term" value="P:ribosomal small subunit assembly"/>
    <property type="evidence" value="ECO:0007669"/>
    <property type="project" value="TreeGrafter"/>
</dbReference>
<dbReference type="GO" id="GO:0006412">
    <property type="term" value="P:translation"/>
    <property type="evidence" value="ECO:0007669"/>
    <property type="project" value="TreeGrafter"/>
</dbReference>
<dbReference type="Gene3D" id="3.30.300.70">
    <property type="entry name" value="RimP-like superfamily, N-terminal"/>
    <property type="match status" value="1"/>
</dbReference>
<dbReference type="HAMAP" id="MF_01077">
    <property type="entry name" value="RimP"/>
    <property type="match status" value="1"/>
</dbReference>
<dbReference type="InterPro" id="IPR003728">
    <property type="entry name" value="Ribosome_maturation_RimP"/>
</dbReference>
<dbReference type="InterPro" id="IPR028989">
    <property type="entry name" value="RimP_N"/>
</dbReference>
<dbReference type="InterPro" id="IPR035956">
    <property type="entry name" value="RimP_N_sf"/>
</dbReference>
<dbReference type="NCBIfam" id="NF000930">
    <property type="entry name" value="PRK00092.2-2"/>
    <property type="match status" value="1"/>
</dbReference>
<dbReference type="PANTHER" id="PTHR33867">
    <property type="entry name" value="RIBOSOME MATURATION FACTOR RIMP"/>
    <property type="match status" value="1"/>
</dbReference>
<dbReference type="PANTHER" id="PTHR33867:SF1">
    <property type="entry name" value="RIBOSOME MATURATION FACTOR RIMP"/>
    <property type="match status" value="1"/>
</dbReference>
<dbReference type="Pfam" id="PF02576">
    <property type="entry name" value="RimP_N"/>
    <property type="match status" value="1"/>
</dbReference>
<dbReference type="SUPFAM" id="SSF75420">
    <property type="entry name" value="YhbC-like, N-terminal domain"/>
    <property type="match status" value="1"/>
</dbReference>
<gene>
    <name evidence="1" type="primary">rimP</name>
    <name type="ordered locus">DIP1480</name>
</gene>
<accession>Q6NGM9</accession>
<sequence>MAFPTVEVLTELVTPVVAQHNMDLEGIRINKAGKKSLVAVSVDSDFRPDLDQLELVSNQISEVFDAGEAAGELSFGAGYTLEVGTPGLDQPLASARRWRRNRHRLVALEVEGKKSVERIGALNDDETAVIVVKRRGKKLVVRSVQLAENTQAVVEIEFAKPAEDELALTALEFDQALDRGEENK</sequence>
<comment type="function">
    <text evidence="1">Required for maturation of 30S ribosomal subunits.</text>
</comment>
<comment type="subcellular location">
    <subcellularLocation>
        <location evidence="1">Cytoplasm</location>
    </subcellularLocation>
</comment>
<comment type="similarity">
    <text evidence="1">Belongs to the RimP family.</text>
</comment>
<evidence type="ECO:0000255" key="1">
    <source>
        <dbReference type="HAMAP-Rule" id="MF_01077"/>
    </source>
</evidence>
<name>RIMP_CORDI</name>
<protein>
    <recommendedName>
        <fullName evidence="1">Ribosome maturation factor RimP</fullName>
    </recommendedName>
</protein>